<sequence>MSTETKNYITPAGWQALKDELYQLVNKERPEIVQIVNWAAGNGDRSENGDYLYGKRRMREIDRRIRFLTKRLEAAVVVDPELREATDQVFFGATVGLLRDDGREQTVKIVGIDEIDTAQNKISWISPLARCLIKAREGDEVVLNTPEGREEIEILSVEYIKID</sequence>
<comment type="function">
    <text evidence="1">Necessary for efficient RNA polymerase transcription elongation past template-encoded arresting sites. The arresting sites in DNA have the property of trapping a certain fraction of elongating RNA polymerases that pass through, resulting in locked ternary complexes. Cleavage of the nascent transcript by cleavage factors such as GreA or GreB allows the resumption of elongation from the new 3'terminus. GreB releases sequences of up to 9 nucleotides in length.</text>
</comment>
<comment type="similarity">
    <text evidence="1">Belongs to the GreA/GreB family. GreB subfamily.</text>
</comment>
<reference key="1">
    <citation type="journal article" date="2000" name="Science">
        <title>Complete genome sequence of Neisseria meningitidis serogroup B strain MC58.</title>
        <authorList>
            <person name="Tettelin H."/>
            <person name="Saunders N.J."/>
            <person name="Heidelberg J.F."/>
            <person name="Jeffries A.C."/>
            <person name="Nelson K.E."/>
            <person name="Eisen J.A."/>
            <person name="Ketchum K.A."/>
            <person name="Hood D.W."/>
            <person name="Peden J.F."/>
            <person name="Dodson R.J."/>
            <person name="Nelson W.C."/>
            <person name="Gwinn M.L."/>
            <person name="DeBoy R.T."/>
            <person name="Peterson J.D."/>
            <person name="Hickey E.K."/>
            <person name="Haft D.H."/>
            <person name="Salzberg S.L."/>
            <person name="White O."/>
            <person name="Fleischmann R.D."/>
            <person name="Dougherty B.A."/>
            <person name="Mason T.M."/>
            <person name="Ciecko A."/>
            <person name="Parksey D.S."/>
            <person name="Blair E."/>
            <person name="Cittone H."/>
            <person name="Clark E.B."/>
            <person name="Cotton M.D."/>
            <person name="Utterback T.R."/>
            <person name="Khouri H.M."/>
            <person name="Qin H."/>
            <person name="Vamathevan J.J."/>
            <person name="Gill J."/>
            <person name="Scarlato V."/>
            <person name="Masignani V."/>
            <person name="Pizza M."/>
            <person name="Grandi G."/>
            <person name="Sun L."/>
            <person name="Smith H.O."/>
            <person name="Fraser C.M."/>
            <person name="Moxon E.R."/>
            <person name="Rappuoli R."/>
            <person name="Venter J.C."/>
        </authorList>
    </citation>
    <scope>NUCLEOTIDE SEQUENCE [LARGE SCALE GENOMIC DNA]</scope>
    <source>
        <strain>ATCC BAA-335 / MC58</strain>
    </source>
</reference>
<dbReference type="EMBL" id="AE002098">
    <property type="protein sequence ID" value="AAF41107.1"/>
    <property type="molecule type" value="Genomic_DNA"/>
</dbReference>
<dbReference type="PIR" id="H81169">
    <property type="entry name" value="H81169"/>
</dbReference>
<dbReference type="RefSeq" id="NP_273731.1">
    <property type="nucleotide sequence ID" value="NC_003112.2"/>
</dbReference>
<dbReference type="RefSeq" id="WP_002225493.1">
    <property type="nucleotide sequence ID" value="NC_003112.2"/>
</dbReference>
<dbReference type="SMR" id="Q9K0C5"/>
<dbReference type="FunCoup" id="Q9K0C5">
    <property type="interactions" value="101"/>
</dbReference>
<dbReference type="STRING" id="122586.NMB0689"/>
<dbReference type="PaxDb" id="122586-NMB0689"/>
<dbReference type="KEGG" id="nme:NMB0689"/>
<dbReference type="PATRIC" id="fig|122586.8.peg.874"/>
<dbReference type="HOGENOM" id="CLU_101379_3_0_4"/>
<dbReference type="InParanoid" id="Q9K0C5"/>
<dbReference type="OrthoDB" id="5511940at2"/>
<dbReference type="Proteomes" id="UP000000425">
    <property type="component" value="Chromosome"/>
</dbReference>
<dbReference type="GO" id="GO:0003677">
    <property type="term" value="F:DNA binding"/>
    <property type="evidence" value="ECO:0007669"/>
    <property type="project" value="UniProtKB-UniRule"/>
</dbReference>
<dbReference type="GO" id="GO:0070063">
    <property type="term" value="F:RNA polymerase binding"/>
    <property type="evidence" value="ECO:0007669"/>
    <property type="project" value="InterPro"/>
</dbReference>
<dbReference type="GO" id="GO:0006354">
    <property type="term" value="P:DNA-templated transcription elongation"/>
    <property type="evidence" value="ECO:0000318"/>
    <property type="project" value="GO_Central"/>
</dbReference>
<dbReference type="GO" id="GO:0032784">
    <property type="term" value="P:regulation of DNA-templated transcription elongation"/>
    <property type="evidence" value="ECO:0007669"/>
    <property type="project" value="UniProtKB-UniRule"/>
</dbReference>
<dbReference type="FunFam" id="1.10.287.180:FF:000001">
    <property type="entry name" value="Transcription elongation factor GreA"/>
    <property type="match status" value="1"/>
</dbReference>
<dbReference type="FunFam" id="3.10.50.30:FF:000001">
    <property type="entry name" value="Transcription elongation factor GreA"/>
    <property type="match status" value="1"/>
</dbReference>
<dbReference type="Gene3D" id="3.10.50.30">
    <property type="entry name" value="Transcription elongation factor, GreA/GreB, C-terminal domain"/>
    <property type="match status" value="1"/>
</dbReference>
<dbReference type="Gene3D" id="1.10.287.180">
    <property type="entry name" value="Transcription elongation factor, GreA/GreB, N-terminal domain"/>
    <property type="match status" value="1"/>
</dbReference>
<dbReference type="HAMAP" id="MF_00105">
    <property type="entry name" value="GreA_GreB"/>
    <property type="match status" value="1"/>
</dbReference>
<dbReference type="HAMAP" id="MF_00930">
    <property type="entry name" value="GreB"/>
    <property type="match status" value="1"/>
</dbReference>
<dbReference type="InterPro" id="IPR036953">
    <property type="entry name" value="GreA/GreB_C_sf"/>
</dbReference>
<dbReference type="InterPro" id="IPR018151">
    <property type="entry name" value="TF_GreA/GreB_CS"/>
</dbReference>
<dbReference type="InterPro" id="IPR028624">
    <property type="entry name" value="Tscrpt_elong_fac_GreA/B"/>
</dbReference>
<dbReference type="InterPro" id="IPR001437">
    <property type="entry name" value="Tscrpt_elong_fac_GreA/B_C"/>
</dbReference>
<dbReference type="InterPro" id="IPR023459">
    <property type="entry name" value="Tscrpt_elong_fac_GreA/B_fam"/>
</dbReference>
<dbReference type="InterPro" id="IPR022691">
    <property type="entry name" value="Tscrpt_elong_fac_GreA/B_N"/>
</dbReference>
<dbReference type="InterPro" id="IPR036805">
    <property type="entry name" value="Tscrpt_elong_fac_GreA/B_N_sf"/>
</dbReference>
<dbReference type="InterPro" id="IPR006358">
    <property type="entry name" value="Tscrpt_elong_fac_GreB"/>
</dbReference>
<dbReference type="NCBIfam" id="TIGR01461">
    <property type="entry name" value="greB"/>
    <property type="match status" value="1"/>
</dbReference>
<dbReference type="NCBIfam" id="NF002506">
    <property type="entry name" value="PRK01885.1"/>
    <property type="match status" value="1"/>
</dbReference>
<dbReference type="PANTHER" id="PTHR30437">
    <property type="entry name" value="TRANSCRIPTION ELONGATION FACTOR GREA"/>
    <property type="match status" value="1"/>
</dbReference>
<dbReference type="PANTHER" id="PTHR30437:SF6">
    <property type="entry name" value="TRANSCRIPTION ELONGATION FACTOR GREB"/>
    <property type="match status" value="1"/>
</dbReference>
<dbReference type="Pfam" id="PF01272">
    <property type="entry name" value="GreA_GreB"/>
    <property type="match status" value="1"/>
</dbReference>
<dbReference type="Pfam" id="PF03449">
    <property type="entry name" value="GreA_GreB_N"/>
    <property type="match status" value="1"/>
</dbReference>
<dbReference type="PIRSF" id="PIRSF006092">
    <property type="entry name" value="GreA_GreB"/>
    <property type="match status" value="1"/>
</dbReference>
<dbReference type="SUPFAM" id="SSF54534">
    <property type="entry name" value="FKBP-like"/>
    <property type="match status" value="1"/>
</dbReference>
<dbReference type="SUPFAM" id="SSF46557">
    <property type="entry name" value="GreA transcript cleavage protein, N-terminal domain"/>
    <property type="match status" value="1"/>
</dbReference>
<dbReference type="PROSITE" id="PS00829">
    <property type="entry name" value="GREAB_1"/>
    <property type="match status" value="1"/>
</dbReference>
<keyword id="KW-0175">Coiled coil</keyword>
<keyword id="KW-0238">DNA-binding</keyword>
<keyword id="KW-1185">Reference proteome</keyword>
<keyword id="KW-0804">Transcription</keyword>
<keyword id="KW-0805">Transcription regulation</keyword>
<organism>
    <name type="scientific">Neisseria meningitidis serogroup B (strain ATCC BAA-335 / MC58)</name>
    <dbReference type="NCBI Taxonomy" id="122586"/>
    <lineage>
        <taxon>Bacteria</taxon>
        <taxon>Pseudomonadati</taxon>
        <taxon>Pseudomonadota</taxon>
        <taxon>Betaproteobacteria</taxon>
        <taxon>Neisseriales</taxon>
        <taxon>Neisseriaceae</taxon>
        <taxon>Neisseria</taxon>
    </lineage>
</organism>
<name>GREB_NEIMB</name>
<protein>
    <recommendedName>
        <fullName evidence="1">Transcription elongation factor GreB</fullName>
    </recommendedName>
    <alternativeName>
        <fullName evidence="1">Transcript cleavage factor GreB</fullName>
    </alternativeName>
</protein>
<evidence type="ECO:0000255" key="1">
    <source>
        <dbReference type="HAMAP-Rule" id="MF_00930"/>
    </source>
</evidence>
<gene>
    <name evidence="1" type="primary">greB</name>
    <name type="ordered locus">NMB0689</name>
</gene>
<accession>Q9K0C5</accession>
<feature type="chain" id="PRO_0000176948" description="Transcription elongation factor GreB">
    <location>
        <begin position="1"/>
        <end position="163"/>
    </location>
</feature>
<feature type="coiled-coil region" evidence="1">
    <location>
        <begin position="54"/>
        <end position="76"/>
    </location>
</feature>
<proteinExistence type="inferred from homology"/>